<accession>P62209</accession>
<accession>G7Z545</accession>
<dbReference type="EMBL" id="AY422794">
    <property type="protein sequence ID" value="AAR00257.1"/>
    <property type="molecule type" value="Genomic_DNA"/>
</dbReference>
<dbReference type="EMBL" id="FQ311868">
    <property type="protein sequence ID" value="CBS86779.1"/>
    <property type="molecule type" value="Genomic_DNA"/>
</dbReference>
<dbReference type="RefSeq" id="WP_014247796.1">
    <property type="nucleotide sequence ID" value="NC_016622.1"/>
</dbReference>
<dbReference type="SMR" id="P62209"/>
<dbReference type="STRING" id="862719.AZOLI_1478"/>
<dbReference type="KEGG" id="ali:AZOLI_1478"/>
<dbReference type="HOGENOM" id="CLU_040469_1_2_5"/>
<dbReference type="OrthoDB" id="9776733at2"/>
<dbReference type="Proteomes" id="UP000005667">
    <property type="component" value="Chromosome"/>
</dbReference>
<dbReference type="GO" id="GO:0005829">
    <property type="term" value="C:cytosol"/>
    <property type="evidence" value="ECO:0007669"/>
    <property type="project" value="TreeGrafter"/>
</dbReference>
<dbReference type="GO" id="GO:0005524">
    <property type="term" value="F:ATP binding"/>
    <property type="evidence" value="ECO:0007669"/>
    <property type="project" value="UniProtKB-UniRule"/>
</dbReference>
<dbReference type="GO" id="GO:0016887">
    <property type="term" value="F:ATP hydrolysis activity"/>
    <property type="evidence" value="ECO:0007669"/>
    <property type="project" value="InterPro"/>
</dbReference>
<dbReference type="GO" id="GO:0140664">
    <property type="term" value="F:ATP-dependent DNA damage sensor activity"/>
    <property type="evidence" value="ECO:0007669"/>
    <property type="project" value="InterPro"/>
</dbReference>
<dbReference type="GO" id="GO:0003684">
    <property type="term" value="F:damaged DNA binding"/>
    <property type="evidence" value="ECO:0007669"/>
    <property type="project" value="UniProtKB-UniRule"/>
</dbReference>
<dbReference type="GO" id="GO:0003697">
    <property type="term" value="F:single-stranded DNA binding"/>
    <property type="evidence" value="ECO:0007669"/>
    <property type="project" value="UniProtKB-UniRule"/>
</dbReference>
<dbReference type="GO" id="GO:0006310">
    <property type="term" value="P:DNA recombination"/>
    <property type="evidence" value="ECO:0007669"/>
    <property type="project" value="UniProtKB-UniRule"/>
</dbReference>
<dbReference type="GO" id="GO:0006281">
    <property type="term" value="P:DNA repair"/>
    <property type="evidence" value="ECO:0007669"/>
    <property type="project" value="UniProtKB-UniRule"/>
</dbReference>
<dbReference type="GO" id="GO:0009432">
    <property type="term" value="P:SOS response"/>
    <property type="evidence" value="ECO:0007669"/>
    <property type="project" value="UniProtKB-UniRule"/>
</dbReference>
<dbReference type="CDD" id="cd00983">
    <property type="entry name" value="RecA"/>
    <property type="match status" value="1"/>
</dbReference>
<dbReference type="FunFam" id="3.40.50.300:FF:000087">
    <property type="entry name" value="Recombinase RecA"/>
    <property type="match status" value="1"/>
</dbReference>
<dbReference type="Gene3D" id="3.40.50.300">
    <property type="entry name" value="P-loop containing nucleotide triphosphate hydrolases"/>
    <property type="match status" value="1"/>
</dbReference>
<dbReference type="HAMAP" id="MF_00268">
    <property type="entry name" value="RecA"/>
    <property type="match status" value="1"/>
</dbReference>
<dbReference type="InterPro" id="IPR003593">
    <property type="entry name" value="AAA+_ATPase"/>
</dbReference>
<dbReference type="InterPro" id="IPR013765">
    <property type="entry name" value="DNA_recomb/repair_RecA"/>
</dbReference>
<dbReference type="InterPro" id="IPR020584">
    <property type="entry name" value="DNA_recomb/repair_RecA_CS"/>
</dbReference>
<dbReference type="InterPro" id="IPR027417">
    <property type="entry name" value="P-loop_NTPase"/>
</dbReference>
<dbReference type="InterPro" id="IPR049261">
    <property type="entry name" value="RecA-like_C"/>
</dbReference>
<dbReference type="InterPro" id="IPR049428">
    <property type="entry name" value="RecA-like_N"/>
</dbReference>
<dbReference type="InterPro" id="IPR020588">
    <property type="entry name" value="RecA_ATP-bd"/>
</dbReference>
<dbReference type="InterPro" id="IPR023400">
    <property type="entry name" value="RecA_C_sf"/>
</dbReference>
<dbReference type="InterPro" id="IPR020587">
    <property type="entry name" value="RecA_monomer-monomer_interface"/>
</dbReference>
<dbReference type="NCBIfam" id="TIGR02012">
    <property type="entry name" value="tigrfam_recA"/>
    <property type="match status" value="1"/>
</dbReference>
<dbReference type="PANTHER" id="PTHR45900:SF1">
    <property type="entry name" value="MITOCHONDRIAL DNA REPAIR PROTEIN RECA HOMOLOG-RELATED"/>
    <property type="match status" value="1"/>
</dbReference>
<dbReference type="PANTHER" id="PTHR45900">
    <property type="entry name" value="RECA"/>
    <property type="match status" value="1"/>
</dbReference>
<dbReference type="Pfam" id="PF00154">
    <property type="entry name" value="RecA"/>
    <property type="match status" value="1"/>
</dbReference>
<dbReference type="Pfam" id="PF21096">
    <property type="entry name" value="RecA_C"/>
    <property type="match status" value="1"/>
</dbReference>
<dbReference type="PRINTS" id="PR00142">
    <property type="entry name" value="RECA"/>
</dbReference>
<dbReference type="SMART" id="SM00382">
    <property type="entry name" value="AAA"/>
    <property type="match status" value="1"/>
</dbReference>
<dbReference type="SUPFAM" id="SSF52540">
    <property type="entry name" value="P-loop containing nucleoside triphosphate hydrolases"/>
    <property type="match status" value="1"/>
</dbReference>
<dbReference type="SUPFAM" id="SSF54752">
    <property type="entry name" value="RecA protein, C-terminal domain"/>
    <property type="match status" value="1"/>
</dbReference>
<dbReference type="PROSITE" id="PS00321">
    <property type="entry name" value="RECA_1"/>
    <property type="match status" value="1"/>
</dbReference>
<dbReference type="PROSITE" id="PS50162">
    <property type="entry name" value="RECA_2"/>
    <property type="match status" value="1"/>
</dbReference>
<dbReference type="PROSITE" id="PS50163">
    <property type="entry name" value="RECA_3"/>
    <property type="match status" value="1"/>
</dbReference>
<reference key="1">
    <citation type="journal article" date="2004" name="FEMS Microbiol. Lett.">
        <title>Construction of a recA mutant of Azospirillum lipoferum and involvement of recA in phase variation.</title>
        <authorList>
            <person name="Vial L."/>
            <person name="Pothier J.F."/>
            <person name="Normand P."/>
            <person name="Moenne-Loccoz Y."/>
            <person name="Bally R."/>
            <person name="Wisniewski-Dye F."/>
        </authorList>
    </citation>
    <scope>NUCLEOTIDE SEQUENCE [GENOMIC DNA]</scope>
    <scope>FUNCTION IN PHASE VARIATION</scope>
    <scope>DISRUPTION PHENOTYPE</scope>
    <source>
        <strain>4B</strain>
    </source>
</reference>
<reference key="2">
    <citation type="journal article" date="2011" name="PLoS Genet.">
        <title>Azospirillum genomes reveal transition of bacteria from aquatic to terrestrial environments.</title>
        <authorList>
            <person name="Wisniewski-Dye F."/>
            <person name="Borziak K."/>
            <person name="Khalsa-Moyers G."/>
            <person name="Alexandre G."/>
            <person name="Sukharnikov L.O."/>
            <person name="Wuichet K."/>
            <person name="Hurst G.B."/>
            <person name="McDonald W.H."/>
            <person name="Robertson J.S."/>
            <person name="Barbe V."/>
            <person name="Calteau A."/>
            <person name="Rouy Z."/>
            <person name="Mangenot S."/>
            <person name="Prigent-Combaret C."/>
            <person name="Normand P."/>
            <person name="Boyer M."/>
            <person name="Siguier P."/>
            <person name="Dessaux Y."/>
            <person name="Elmerich C."/>
            <person name="Condemine G."/>
            <person name="Krishnen G."/>
            <person name="Kennedy I."/>
            <person name="Paterson A.H."/>
            <person name="Gonzalez V."/>
            <person name="Mavingui P."/>
            <person name="Zhulin I.B."/>
        </authorList>
    </citation>
    <scope>NUCLEOTIDE SEQUENCE [LARGE SCALE GENOMIC DNA]</scope>
    <source>
        <strain>4B</strain>
    </source>
</reference>
<name>RECA_AZOL4</name>
<protein>
    <recommendedName>
        <fullName evidence="1">Protein RecA</fullName>
    </recommendedName>
    <alternativeName>
        <fullName evidence="1">Recombinase A</fullName>
    </alternativeName>
</protein>
<feature type="chain" id="PRO_0000122645" description="Protein RecA">
    <location>
        <begin position="1"/>
        <end position="359"/>
    </location>
</feature>
<feature type="binding site" evidence="1">
    <location>
        <begin position="77"/>
        <end position="84"/>
    </location>
    <ligand>
        <name>ATP</name>
        <dbReference type="ChEBI" id="CHEBI:30616"/>
    </ligand>
</feature>
<feature type="sequence conflict" description="In Ref. 1; AAR00257." evidence="3" ref="1">
    <original>SHV</original>
    <variation>AMS</variation>
    <location>
        <begin position="173"/>
        <end position="175"/>
    </location>
</feature>
<feature type="sequence conflict" description="In Ref. 1; AAR00257." evidence="3" ref="1">
    <original>PEADGEASTPE</original>
    <variation>RKPTAKPPHRSEVPSEQEARC</variation>
    <location>
        <begin position="349"/>
        <end position="359"/>
    </location>
</feature>
<proteinExistence type="evidence at protein level"/>
<gene>
    <name evidence="1" type="primary">recA</name>
    <name type="ordered locus">AZOLI_1478</name>
</gene>
<evidence type="ECO:0000255" key="1">
    <source>
        <dbReference type="HAMAP-Rule" id="MF_00268"/>
    </source>
</evidence>
<evidence type="ECO:0000269" key="2">
    <source>
    </source>
</evidence>
<evidence type="ECO:0000305" key="3"/>
<sequence length="359" mass="38137">MSSAQLRLVEKDSMDKQKALDAALSQIERAFGKGSIMKLGARENLVETEVISTGSLGLDIALGIGGLPKGRIVEIYGPESSGKTTLALHAIAQAQKAGGTCAFVDAEHALDPSYARKLGVNIDELLISQPDAGEQALEIADTLVRSGAIDVLVVDSVAALVPRAELEGEMGDSHVGLHARLMSQALRKLTGSISKSNCLVIFINQIRLKIGVMFGNPETTTGGNALKFYASVRLDIRRIGSIKDRDTVVGNQTRVKVVKNKMAPPFRVVEFDIMYGEGVSKVGELLDLGIQAGVVDKSGAWFSYDGTRIGQGRENAKTYLRNNPEMADAIEAKIRGNAGLVADAMMGTPEADGEASTPE</sequence>
<organism>
    <name type="scientific">Azospirillum lipoferum (strain 4B)</name>
    <dbReference type="NCBI Taxonomy" id="862719"/>
    <lineage>
        <taxon>Bacteria</taxon>
        <taxon>Pseudomonadati</taxon>
        <taxon>Pseudomonadota</taxon>
        <taxon>Alphaproteobacteria</taxon>
        <taxon>Rhodospirillales</taxon>
        <taxon>Azospirillaceae</taxon>
        <taxon>Azospirillum</taxon>
    </lineage>
</organism>
<keyword id="KW-0067">ATP-binding</keyword>
<keyword id="KW-0963">Cytoplasm</keyword>
<keyword id="KW-0227">DNA damage</keyword>
<keyword id="KW-0233">DNA recombination</keyword>
<keyword id="KW-0234">DNA repair</keyword>
<keyword id="KW-0238">DNA-binding</keyword>
<keyword id="KW-0547">Nucleotide-binding</keyword>
<keyword id="KW-0742">SOS response</keyword>
<comment type="function">
    <text evidence="1 2">Can catalyze the hydrolysis of ATP in the presence of single-stranded DNA, the ATP-dependent uptake of single-stranded DNA by duplex DNA, and the ATP-dependent hybridization of homologous single-stranded DNAs. It interacts with LexA causing its activation and leading to its autocatalytic cleavage.</text>
</comment>
<comment type="subcellular location">
    <subcellularLocation>
        <location evidence="1">Cytoplasm</location>
    </subcellularLocation>
</comment>
<comment type="disruption phenotype">
    <text evidence="2">Cells are more sensitive to UV and MMS, and have no detectable recombinase activity. They are still able to generate phase variants, as do wild-type cells, and surprisingly do so at a 10-fold greater rate. Phase variants irreversibly lose the ability to swim, and undergo changes in their sugar assimilation profile.</text>
</comment>
<comment type="similarity">
    <text evidence="1">Belongs to the RecA family.</text>
</comment>